<name>VPB1B_MOUSE</name>
<keyword id="KW-1015">Disulfide bond</keyword>
<keyword id="KW-0393">Immunoglobulin domain</keyword>
<keyword id="KW-1185">Reference proteome</keyword>
<keyword id="KW-0732">Signal</keyword>
<organism>
    <name type="scientific">Mus musculus</name>
    <name type="common">Mouse</name>
    <dbReference type="NCBI Taxonomy" id="10090"/>
    <lineage>
        <taxon>Eukaryota</taxon>
        <taxon>Metazoa</taxon>
        <taxon>Chordata</taxon>
        <taxon>Craniata</taxon>
        <taxon>Vertebrata</taxon>
        <taxon>Euteleostomi</taxon>
        <taxon>Mammalia</taxon>
        <taxon>Eutheria</taxon>
        <taxon>Euarchontoglires</taxon>
        <taxon>Glires</taxon>
        <taxon>Rodentia</taxon>
        <taxon>Myomorpha</taxon>
        <taxon>Muroidea</taxon>
        <taxon>Muridae</taxon>
        <taxon>Murinae</taxon>
        <taxon>Mus</taxon>
        <taxon>Mus</taxon>
    </lineage>
</organism>
<gene>
    <name evidence="5" type="primary">Vpreb1b</name>
    <name evidence="5" type="synonym">Vpreb2</name>
</gene>
<comment type="function">
    <text>Associates with the Ig-mu chain to form a molecular complex that is expressed on the surface of pre-B-cells. This complex presumably regulates Ig gene rearrangements in the early steps of B-cell differentiation.</text>
</comment>
<comment type="tissue specificity">
    <text evidence="3">Only expressed by pre-B-cells.</text>
</comment>
<comment type="similarity">
    <text evidence="4">Belongs to the immunoglobulin superfamily.</text>
</comment>
<proteinExistence type="evidence at transcript level"/>
<sequence length="142" mass="16052">MAWTSVLLMLLAHLTGCGPQPMVHQPPSASSSLGATIRLSCTLSNDHNIGIYSIYWYQQRPGHPPRFLLRYFSHSDKHQGPDIPPRFSGSKDTARNLGYLSISELQPEDEAVYYCAVGLRSHEKKRMEREWEGEKSYTDLGS</sequence>
<evidence type="ECO:0000255" key="1"/>
<evidence type="ECO:0000255" key="2">
    <source>
        <dbReference type="PROSITE-ProRule" id="PRU00114"/>
    </source>
</evidence>
<evidence type="ECO:0000269" key="3">
    <source>
    </source>
</evidence>
<evidence type="ECO:0000305" key="4"/>
<evidence type="ECO:0000312" key="5">
    <source>
        <dbReference type="MGI" id="MGI:98937"/>
    </source>
</evidence>
<dbReference type="EMBL" id="X05563">
    <property type="protein sequence ID" value="CAA29077.1"/>
    <property type="molecule type" value="Genomic_DNA"/>
</dbReference>
<dbReference type="CCDS" id="CCDS28015.1"/>
<dbReference type="PIR" id="B28344">
    <property type="entry name" value="B28344"/>
</dbReference>
<dbReference type="RefSeq" id="NP_058679.1">
    <property type="nucleotide sequence ID" value="NM_016983.1"/>
</dbReference>
<dbReference type="SMR" id="P13373"/>
<dbReference type="FunCoup" id="P13373">
    <property type="interactions" value="805"/>
</dbReference>
<dbReference type="STRING" id="10090.ENSMUSP00000074835"/>
<dbReference type="PaxDb" id="10090-ENSMUSP00000074835"/>
<dbReference type="DNASU" id="22363"/>
<dbReference type="Ensembl" id="ENSMUST00000075371.5">
    <property type="protein sequence ID" value="ENSMUSP00000074835.4"/>
    <property type="gene ID" value="ENSMUSG00000059280.5"/>
</dbReference>
<dbReference type="GeneID" id="22363"/>
<dbReference type="KEGG" id="mmu:22363"/>
<dbReference type="UCSC" id="uc007ymq.1">
    <property type="organism name" value="mouse"/>
</dbReference>
<dbReference type="AGR" id="MGI:98937"/>
<dbReference type="CTD" id="22363"/>
<dbReference type="MGI" id="MGI:98937">
    <property type="gene designation" value="Vpreb1b"/>
</dbReference>
<dbReference type="VEuPathDB" id="HostDB:ENSMUSG00000059280"/>
<dbReference type="eggNOG" id="ENOG502RTXJ">
    <property type="taxonomic scope" value="Eukaryota"/>
</dbReference>
<dbReference type="GeneTree" id="ENSGT00940000161017"/>
<dbReference type="HOGENOM" id="CLU_077975_4_0_1"/>
<dbReference type="InParanoid" id="P13373"/>
<dbReference type="OMA" id="FYSIFWY"/>
<dbReference type="OrthoDB" id="8908372at2759"/>
<dbReference type="PhylomeDB" id="P13373"/>
<dbReference type="TreeFam" id="TF352061"/>
<dbReference type="Reactome" id="R-MMU-202733">
    <property type="pathway name" value="Cell surface interactions at the vascular wall"/>
</dbReference>
<dbReference type="BioGRID-ORCS" id="22363">
    <property type="hits" value="4 hits in 52 CRISPR screens"/>
</dbReference>
<dbReference type="PRO" id="PR:P13373"/>
<dbReference type="Proteomes" id="UP000000589">
    <property type="component" value="Chromosome 16"/>
</dbReference>
<dbReference type="RNAct" id="P13373">
    <property type="molecule type" value="protein"/>
</dbReference>
<dbReference type="Bgee" id="ENSMUSG00000059280">
    <property type="expression patterns" value="Expressed in mesodermal cell in embryo and 10 other cell types or tissues"/>
</dbReference>
<dbReference type="GO" id="GO:0001782">
    <property type="term" value="P:B cell homeostasis"/>
    <property type="evidence" value="ECO:0000316"/>
    <property type="project" value="MGI"/>
</dbReference>
<dbReference type="GO" id="GO:0042100">
    <property type="term" value="P:B cell proliferation"/>
    <property type="evidence" value="ECO:0000316"/>
    <property type="project" value="MGI"/>
</dbReference>
<dbReference type="GO" id="GO:0000902">
    <property type="term" value="P:cell morphogenesis"/>
    <property type="evidence" value="ECO:0000316"/>
    <property type="project" value="MGI"/>
</dbReference>
<dbReference type="GO" id="GO:0008361">
    <property type="term" value="P:regulation of cell size"/>
    <property type="evidence" value="ECO:0000316"/>
    <property type="project" value="MGI"/>
</dbReference>
<dbReference type="FunFam" id="2.60.40.10:FF:000721">
    <property type="entry name" value="Immunoglobulin lambda variable 5-45"/>
    <property type="match status" value="1"/>
</dbReference>
<dbReference type="Gene3D" id="2.60.40.10">
    <property type="entry name" value="Immunoglobulins"/>
    <property type="match status" value="1"/>
</dbReference>
<dbReference type="InterPro" id="IPR007110">
    <property type="entry name" value="Ig-like_dom"/>
</dbReference>
<dbReference type="InterPro" id="IPR036179">
    <property type="entry name" value="Ig-like_dom_sf"/>
</dbReference>
<dbReference type="InterPro" id="IPR013783">
    <property type="entry name" value="Ig-like_fold"/>
</dbReference>
<dbReference type="InterPro" id="IPR003599">
    <property type="entry name" value="Ig_sub"/>
</dbReference>
<dbReference type="InterPro" id="IPR013106">
    <property type="entry name" value="Ig_V-set"/>
</dbReference>
<dbReference type="InterPro" id="IPR050150">
    <property type="entry name" value="IgV_Light_Chain"/>
</dbReference>
<dbReference type="PANTHER" id="PTHR23267">
    <property type="entry name" value="IMMUNOGLOBULIN LIGHT CHAIN"/>
    <property type="match status" value="1"/>
</dbReference>
<dbReference type="Pfam" id="PF07686">
    <property type="entry name" value="V-set"/>
    <property type="match status" value="1"/>
</dbReference>
<dbReference type="SMART" id="SM00409">
    <property type="entry name" value="IG"/>
    <property type="match status" value="1"/>
</dbReference>
<dbReference type="SMART" id="SM00406">
    <property type="entry name" value="IGv"/>
    <property type="match status" value="1"/>
</dbReference>
<dbReference type="SUPFAM" id="SSF48726">
    <property type="entry name" value="Immunoglobulin"/>
    <property type="match status" value="1"/>
</dbReference>
<dbReference type="PROSITE" id="PS50835">
    <property type="entry name" value="IG_LIKE"/>
    <property type="match status" value="1"/>
</dbReference>
<reference key="1">
    <citation type="journal article" date="1987" name="EMBO J.">
        <title>A second gene, VpreB in the lambda 5 locus of the mouse, which appears to be selectively expressed in pre-B lymphocytes.</title>
        <authorList>
            <person name="Kudo A."/>
            <person name="Melchers F."/>
        </authorList>
    </citation>
    <scope>NUCLEOTIDE SEQUENCE [GENOMIC DNA]</scope>
    <scope>TISSUE SPECIFICITY</scope>
    <source>
        <strain>C57BL/6 X DBA/2J</strain>
    </source>
</reference>
<protein>
    <recommendedName>
        <fullName evidence="4">Immunoglobulin omega chain</fullName>
    </recommendedName>
    <alternativeName>
        <fullName>Protein VPreB2</fullName>
    </alternativeName>
    <alternativeName>
        <fullName evidence="5">V-set pre-B cell surrogate light chain 1B</fullName>
    </alternativeName>
</protein>
<feature type="signal peptide" evidence="1">
    <location>
        <begin position="1"/>
        <end position="19"/>
    </location>
</feature>
<feature type="chain" id="PRO_0000015002" description="Immunoglobulin omega chain">
    <location>
        <begin position="20"/>
        <end position="142"/>
    </location>
</feature>
<feature type="region of interest" description="Framework-1">
    <location>
        <begin position="20"/>
        <end position="41"/>
    </location>
</feature>
<feature type="region of interest" description="Complementarity-determining-1">
    <location>
        <begin position="42"/>
        <end position="56"/>
    </location>
</feature>
<feature type="region of interest" description="Framework-2">
    <location>
        <begin position="57"/>
        <end position="70"/>
    </location>
</feature>
<feature type="region of interest" description="Complementarity-determining-2">
    <location>
        <begin position="71"/>
        <end position="81"/>
    </location>
</feature>
<feature type="region of interest" description="Framework-3">
    <location>
        <begin position="82"/>
        <end position="115"/>
    </location>
</feature>
<feature type="disulfide bond" evidence="2">
    <location>
        <begin position="41"/>
        <end position="115"/>
    </location>
</feature>
<accession>P13373</accession>